<proteinExistence type="inferred from homology"/>
<reference key="1">
    <citation type="submission" date="2008-05" db="EMBL/GenBank/DDBJ databases">
        <title>Complete genome sequence of Clostridium botulinum E3 str. Alaska E43.</title>
        <authorList>
            <person name="Brinkac L.M."/>
            <person name="Brown J.L."/>
            <person name="Bruce D."/>
            <person name="Detter C."/>
            <person name="Munk C."/>
            <person name="Smith L.A."/>
            <person name="Smith T.J."/>
            <person name="Sutton G."/>
            <person name="Brettin T.S."/>
        </authorList>
    </citation>
    <scope>NUCLEOTIDE SEQUENCE [LARGE SCALE GENOMIC DNA]</scope>
    <source>
        <strain>Alaska E43 / Type E3</strain>
    </source>
</reference>
<keyword id="KW-0687">Ribonucleoprotein</keyword>
<keyword id="KW-0689">Ribosomal protein</keyword>
<gene>
    <name evidence="1" type="primary">rplL</name>
    <name type="ordered locus">CLH_0229</name>
</gene>
<evidence type="ECO:0000255" key="1">
    <source>
        <dbReference type="HAMAP-Rule" id="MF_00368"/>
    </source>
</evidence>
<evidence type="ECO:0000305" key="2"/>
<organism>
    <name type="scientific">Clostridium botulinum (strain Alaska E43 / Type E3)</name>
    <dbReference type="NCBI Taxonomy" id="508767"/>
    <lineage>
        <taxon>Bacteria</taxon>
        <taxon>Bacillati</taxon>
        <taxon>Bacillota</taxon>
        <taxon>Clostridia</taxon>
        <taxon>Eubacteriales</taxon>
        <taxon>Clostridiaceae</taxon>
        <taxon>Clostridium</taxon>
    </lineage>
</organism>
<feature type="chain" id="PRO_1000121414" description="Large ribosomal subunit protein bL12">
    <location>
        <begin position="1"/>
        <end position="120"/>
    </location>
</feature>
<comment type="function">
    <text evidence="1">Forms part of the ribosomal stalk which helps the ribosome interact with GTP-bound translation factors. Is thus essential for accurate translation.</text>
</comment>
<comment type="subunit">
    <text evidence="1">Homodimer. Part of the ribosomal stalk of the 50S ribosomal subunit. Forms a multimeric L10(L12)X complex, where L10 forms an elongated spine to which 2 to 4 L12 dimers bind in a sequential fashion. Binds GTP-bound translation factors.</text>
</comment>
<comment type="similarity">
    <text evidence="1">Belongs to the bacterial ribosomal protein bL12 family.</text>
</comment>
<protein>
    <recommendedName>
        <fullName evidence="1">Large ribosomal subunit protein bL12</fullName>
    </recommendedName>
    <alternativeName>
        <fullName evidence="2">50S ribosomal protein L7/L12</fullName>
    </alternativeName>
</protein>
<dbReference type="EMBL" id="CP001078">
    <property type="protein sequence ID" value="ACD52966.1"/>
    <property type="molecule type" value="Genomic_DNA"/>
</dbReference>
<dbReference type="RefSeq" id="WP_003374668.1">
    <property type="nucleotide sequence ID" value="NC_010723.1"/>
</dbReference>
<dbReference type="SMR" id="B2UYA2"/>
<dbReference type="KEGG" id="cbt:CLH_0229"/>
<dbReference type="HOGENOM" id="CLU_086499_3_2_9"/>
<dbReference type="GO" id="GO:0022625">
    <property type="term" value="C:cytosolic large ribosomal subunit"/>
    <property type="evidence" value="ECO:0007669"/>
    <property type="project" value="TreeGrafter"/>
</dbReference>
<dbReference type="GO" id="GO:0003729">
    <property type="term" value="F:mRNA binding"/>
    <property type="evidence" value="ECO:0007669"/>
    <property type="project" value="TreeGrafter"/>
</dbReference>
<dbReference type="GO" id="GO:0003735">
    <property type="term" value="F:structural constituent of ribosome"/>
    <property type="evidence" value="ECO:0007669"/>
    <property type="project" value="InterPro"/>
</dbReference>
<dbReference type="GO" id="GO:0006412">
    <property type="term" value="P:translation"/>
    <property type="evidence" value="ECO:0007669"/>
    <property type="project" value="UniProtKB-UniRule"/>
</dbReference>
<dbReference type="CDD" id="cd00387">
    <property type="entry name" value="Ribosomal_L7_L12"/>
    <property type="match status" value="1"/>
</dbReference>
<dbReference type="FunFam" id="1.20.5.710:FF:000002">
    <property type="entry name" value="50S ribosomal protein L7/L12"/>
    <property type="match status" value="1"/>
</dbReference>
<dbReference type="FunFam" id="3.30.1390.10:FF:000001">
    <property type="entry name" value="50S ribosomal protein L7/L12"/>
    <property type="match status" value="1"/>
</dbReference>
<dbReference type="Gene3D" id="3.30.1390.10">
    <property type="match status" value="1"/>
</dbReference>
<dbReference type="Gene3D" id="1.20.5.710">
    <property type="entry name" value="Single helix bin"/>
    <property type="match status" value="1"/>
</dbReference>
<dbReference type="HAMAP" id="MF_00368">
    <property type="entry name" value="Ribosomal_bL12"/>
    <property type="match status" value="1"/>
</dbReference>
<dbReference type="InterPro" id="IPR000206">
    <property type="entry name" value="Ribosomal_bL12"/>
</dbReference>
<dbReference type="InterPro" id="IPR013823">
    <property type="entry name" value="Ribosomal_bL12_C"/>
</dbReference>
<dbReference type="InterPro" id="IPR014719">
    <property type="entry name" value="Ribosomal_bL12_C/ClpS-like"/>
</dbReference>
<dbReference type="InterPro" id="IPR008932">
    <property type="entry name" value="Ribosomal_bL12_oligo"/>
</dbReference>
<dbReference type="InterPro" id="IPR036235">
    <property type="entry name" value="Ribosomal_bL12_oligo_N_sf"/>
</dbReference>
<dbReference type="NCBIfam" id="TIGR00855">
    <property type="entry name" value="L12"/>
    <property type="match status" value="1"/>
</dbReference>
<dbReference type="PANTHER" id="PTHR45987">
    <property type="entry name" value="39S RIBOSOMAL PROTEIN L12"/>
    <property type="match status" value="1"/>
</dbReference>
<dbReference type="PANTHER" id="PTHR45987:SF4">
    <property type="entry name" value="LARGE RIBOSOMAL SUBUNIT PROTEIN BL12M"/>
    <property type="match status" value="1"/>
</dbReference>
<dbReference type="Pfam" id="PF00542">
    <property type="entry name" value="Ribosomal_L12"/>
    <property type="match status" value="1"/>
</dbReference>
<dbReference type="Pfam" id="PF16320">
    <property type="entry name" value="Ribosomal_L12_N"/>
    <property type="match status" value="1"/>
</dbReference>
<dbReference type="SUPFAM" id="SSF54736">
    <property type="entry name" value="ClpS-like"/>
    <property type="match status" value="1"/>
</dbReference>
<dbReference type="SUPFAM" id="SSF48300">
    <property type="entry name" value="Ribosomal protein L7/12, oligomerisation (N-terminal) domain"/>
    <property type="match status" value="1"/>
</dbReference>
<sequence length="120" mass="12537">MTREDIIQAIKEMSVLELNELVKACEEEFGVSAAAPVAVAGAVAGGAAEEKTEFDVILASAGANKIKVIKAVREITGLGLKEAKEIVDGAPKTLKEAVSKEEAEDMKAKLAEVGAEVEVK</sequence>
<name>RL7_CLOBA</name>
<accession>B2UYA2</accession>